<reference key="1">
    <citation type="journal article" date="2011" name="MBio">
        <title>Novel metabolic attributes of the genus Cyanothece, comprising a group of unicellular nitrogen-fixing Cyanobacteria.</title>
        <authorList>
            <person name="Bandyopadhyay A."/>
            <person name="Elvitigala T."/>
            <person name="Welsh E."/>
            <person name="Stockel J."/>
            <person name="Liberton M."/>
            <person name="Min H."/>
            <person name="Sherman L.A."/>
            <person name="Pakrasi H.B."/>
        </authorList>
    </citation>
    <scope>NUCLEOTIDE SEQUENCE [LARGE SCALE GENOMIC DNA]</scope>
    <source>
        <strain>PCC 8801 / RF-1</strain>
    </source>
</reference>
<feature type="chain" id="PRO_1000119512" description="Trigger factor">
    <location>
        <begin position="1"/>
        <end position="455"/>
    </location>
</feature>
<feature type="domain" description="PPIase FKBP-type" evidence="1">
    <location>
        <begin position="169"/>
        <end position="262"/>
    </location>
</feature>
<name>TIG_RIPO1</name>
<accession>B7JW76</accession>
<dbReference type="EC" id="5.2.1.8" evidence="1"/>
<dbReference type="EMBL" id="CP001287">
    <property type="protein sequence ID" value="ACK66921.1"/>
    <property type="molecule type" value="Genomic_DNA"/>
</dbReference>
<dbReference type="RefSeq" id="WP_012596187.1">
    <property type="nucleotide sequence ID" value="NC_011726.1"/>
</dbReference>
<dbReference type="SMR" id="B7JW76"/>
<dbReference type="STRING" id="41431.PCC8801_2925"/>
<dbReference type="KEGG" id="cyp:PCC8801_2925"/>
<dbReference type="eggNOG" id="COG0544">
    <property type="taxonomic scope" value="Bacteria"/>
</dbReference>
<dbReference type="HOGENOM" id="CLU_033058_3_1_3"/>
<dbReference type="OrthoDB" id="9767721at2"/>
<dbReference type="Proteomes" id="UP000008204">
    <property type="component" value="Chromosome"/>
</dbReference>
<dbReference type="GO" id="GO:0005737">
    <property type="term" value="C:cytoplasm"/>
    <property type="evidence" value="ECO:0007669"/>
    <property type="project" value="UniProtKB-SubCell"/>
</dbReference>
<dbReference type="GO" id="GO:0003755">
    <property type="term" value="F:peptidyl-prolyl cis-trans isomerase activity"/>
    <property type="evidence" value="ECO:0007669"/>
    <property type="project" value="UniProtKB-UniRule"/>
</dbReference>
<dbReference type="GO" id="GO:0044183">
    <property type="term" value="F:protein folding chaperone"/>
    <property type="evidence" value="ECO:0007669"/>
    <property type="project" value="TreeGrafter"/>
</dbReference>
<dbReference type="GO" id="GO:0043022">
    <property type="term" value="F:ribosome binding"/>
    <property type="evidence" value="ECO:0007669"/>
    <property type="project" value="TreeGrafter"/>
</dbReference>
<dbReference type="GO" id="GO:0051083">
    <property type="term" value="P:'de novo' cotranslational protein folding"/>
    <property type="evidence" value="ECO:0007669"/>
    <property type="project" value="TreeGrafter"/>
</dbReference>
<dbReference type="GO" id="GO:0051301">
    <property type="term" value="P:cell division"/>
    <property type="evidence" value="ECO:0007669"/>
    <property type="project" value="UniProtKB-KW"/>
</dbReference>
<dbReference type="GO" id="GO:0061077">
    <property type="term" value="P:chaperone-mediated protein folding"/>
    <property type="evidence" value="ECO:0007669"/>
    <property type="project" value="TreeGrafter"/>
</dbReference>
<dbReference type="GO" id="GO:0015031">
    <property type="term" value="P:protein transport"/>
    <property type="evidence" value="ECO:0007669"/>
    <property type="project" value="UniProtKB-UniRule"/>
</dbReference>
<dbReference type="GO" id="GO:0043335">
    <property type="term" value="P:protein unfolding"/>
    <property type="evidence" value="ECO:0007669"/>
    <property type="project" value="TreeGrafter"/>
</dbReference>
<dbReference type="FunFam" id="3.10.50.40:FF:000001">
    <property type="entry name" value="Trigger factor"/>
    <property type="match status" value="1"/>
</dbReference>
<dbReference type="FunFam" id="3.30.70.1050:FF:000004">
    <property type="entry name" value="Trigger factor"/>
    <property type="match status" value="1"/>
</dbReference>
<dbReference type="Gene3D" id="3.10.50.40">
    <property type="match status" value="1"/>
</dbReference>
<dbReference type="Gene3D" id="3.30.70.1050">
    <property type="entry name" value="Trigger factor ribosome-binding domain"/>
    <property type="match status" value="1"/>
</dbReference>
<dbReference type="Gene3D" id="1.10.3120.10">
    <property type="entry name" value="Trigger factor, C-terminal domain"/>
    <property type="match status" value="1"/>
</dbReference>
<dbReference type="HAMAP" id="MF_00303">
    <property type="entry name" value="Trigger_factor_Tig"/>
    <property type="match status" value="1"/>
</dbReference>
<dbReference type="InterPro" id="IPR046357">
    <property type="entry name" value="PPIase_dom_sf"/>
</dbReference>
<dbReference type="InterPro" id="IPR001179">
    <property type="entry name" value="PPIase_FKBP_dom"/>
</dbReference>
<dbReference type="InterPro" id="IPR005215">
    <property type="entry name" value="Trig_fac"/>
</dbReference>
<dbReference type="InterPro" id="IPR008880">
    <property type="entry name" value="Trigger_fac_C"/>
</dbReference>
<dbReference type="InterPro" id="IPR037041">
    <property type="entry name" value="Trigger_fac_C_sf"/>
</dbReference>
<dbReference type="InterPro" id="IPR008881">
    <property type="entry name" value="Trigger_fac_ribosome-bd_bac"/>
</dbReference>
<dbReference type="InterPro" id="IPR036611">
    <property type="entry name" value="Trigger_fac_ribosome-bd_sf"/>
</dbReference>
<dbReference type="InterPro" id="IPR027304">
    <property type="entry name" value="Trigger_fact/SurA_dom_sf"/>
</dbReference>
<dbReference type="NCBIfam" id="TIGR00115">
    <property type="entry name" value="tig"/>
    <property type="match status" value="1"/>
</dbReference>
<dbReference type="PANTHER" id="PTHR30560">
    <property type="entry name" value="TRIGGER FACTOR CHAPERONE AND PEPTIDYL-PROLYL CIS/TRANS ISOMERASE"/>
    <property type="match status" value="1"/>
</dbReference>
<dbReference type="PANTHER" id="PTHR30560:SF3">
    <property type="entry name" value="TRIGGER FACTOR-LIKE PROTEIN TIG, CHLOROPLASTIC"/>
    <property type="match status" value="1"/>
</dbReference>
<dbReference type="Pfam" id="PF00254">
    <property type="entry name" value="FKBP_C"/>
    <property type="match status" value="1"/>
</dbReference>
<dbReference type="Pfam" id="PF05698">
    <property type="entry name" value="Trigger_C"/>
    <property type="match status" value="1"/>
</dbReference>
<dbReference type="Pfam" id="PF05697">
    <property type="entry name" value="Trigger_N"/>
    <property type="match status" value="1"/>
</dbReference>
<dbReference type="PIRSF" id="PIRSF003095">
    <property type="entry name" value="Trigger_factor"/>
    <property type="match status" value="1"/>
</dbReference>
<dbReference type="SUPFAM" id="SSF54534">
    <property type="entry name" value="FKBP-like"/>
    <property type="match status" value="1"/>
</dbReference>
<dbReference type="SUPFAM" id="SSF109998">
    <property type="entry name" value="Triger factor/SurA peptide-binding domain-like"/>
    <property type="match status" value="1"/>
</dbReference>
<dbReference type="SUPFAM" id="SSF102735">
    <property type="entry name" value="Trigger factor ribosome-binding domain"/>
    <property type="match status" value="1"/>
</dbReference>
<dbReference type="PROSITE" id="PS50059">
    <property type="entry name" value="FKBP_PPIASE"/>
    <property type="match status" value="1"/>
</dbReference>
<protein>
    <recommendedName>
        <fullName evidence="1">Trigger factor</fullName>
        <shortName evidence="1">TF</shortName>
        <ecNumber evidence="1">5.2.1.8</ecNumber>
    </recommendedName>
    <alternativeName>
        <fullName evidence="1">PPIase</fullName>
    </alternativeName>
</protein>
<evidence type="ECO:0000255" key="1">
    <source>
        <dbReference type="HAMAP-Rule" id="MF_00303"/>
    </source>
</evidence>
<organism>
    <name type="scientific">Rippkaea orientalis (strain PCC 8801 / RF-1)</name>
    <name type="common">Cyanothece sp. (strain PCC 8801)</name>
    <dbReference type="NCBI Taxonomy" id="41431"/>
    <lineage>
        <taxon>Bacteria</taxon>
        <taxon>Bacillati</taxon>
        <taxon>Cyanobacteriota</taxon>
        <taxon>Cyanophyceae</taxon>
        <taxon>Oscillatoriophycideae</taxon>
        <taxon>Chroococcales</taxon>
        <taxon>Aphanothecaceae</taxon>
        <taxon>Rippkaea</taxon>
        <taxon>Rippkaea orientalis</taxon>
    </lineage>
</organism>
<gene>
    <name evidence="1" type="primary">tig</name>
    <name type="ordered locus">PCC8801_2925</name>
</gene>
<keyword id="KW-0131">Cell cycle</keyword>
<keyword id="KW-0132">Cell division</keyword>
<keyword id="KW-0143">Chaperone</keyword>
<keyword id="KW-0963">Cytoplasm</keyword>
<keyword id="KW-0413">Isomerase</keyword>
<keyword id="KW-1185">Reference proteome</keyword>
<keyword id="KW-0697">Rotamase</keyword>
<sequence>MKVTQEKLPDSQIGLEIEISAEASKKAYETKVNTLARTANIPGFRKGKVPRQILLQRIGTEYIKATTLQELIEDSLKAAIKQESLESIGDFELKSKFDELVQQFKPGEPLTFSAAIDVPPTVTLGDYQSLSVKAEETVYNPEKLENWFKERQEQQATLVPVEDRKAEMGDVAIVDYEGYFAPEEGEETERKPIPGVQGQDFRVDLTEGRFIQGMVEGIVGMQPEETQEITVTFPSDYPREDLAGQVAIFKITVKELKAKELPELDDDFAEEVSEFATIAELRESLEKQFTEEAQEATKKSIHDAMITQLLEICPVDLPNTLIEDEVTQVLTQTAMQMEQMGIDIRQLFVKENIPKLRENARPDAISRLKQSLILQEIAKVESITPEASLVEERINKIKEQLSERDVDFDKLEQMVTEELTMEAILNWLQEKATVELVPEGTLKPAEDQEAESQEE</sequence>
<comment type="function">
    <text evidence="1">Involved in protein export. Acts as a chaperone by maintaining the newly synthesized protein in an open conformation. Functions as a peptidyl-prolyl cis-trans isomerase.</text>
</comment>
<comment type="catalytic activity">
    <reaction evidence="1">
        <text>[protein]-peptidylproline (omega=180) = [protein]-peptidylproline (omega=0)</text>
        <dbReference type="Rhea" id="RHEA:16237"/>
        <dbReference type="Rhea" id="RHEA-COMP:10747"/>
        <dbReference type="Rhea" id="RHEA-COMP:10748"/>
        <dbReference type="ChEBI" id="CHEBI:83833"/>
        <dbReference type="ChEBI" id="CHEBI:83834"/>
        <dbReference type="EC" id="5.2.1.8"/>
    </reaction>
</comment>
<comment type="subcellular location">
    <subcellularLocation>
        <location>Cytoplasm</location>
    </subcellularLocation>
    <text evidence="1">About half TF is bound to the ribosome near the polypeptide exit tunnel while the other half is free in the cytoplasm.</text>
</comment>
<comment type="domain">
    <text evidence="1">Consists of 3 domains; the N-terminus binds the ribosome, the middle domain has PPIase activity, while the C-terminus has intrinsic chaperone activity on its own.</text>
</comment>
<comment type="similarity">
    <text evidence="1">Belongs to the FKBP-type PPIase family. Tig subfamily.</text>
</comment>
<proteinExistence type="inferred from homology"/>